<name>ECS1_ARATH</name>
<protein>
    <recommendedName>
        <fullName evidence="6">Protein ECS1</fullName>
    </recommendedName>
    <alternativeName>
        <fullName evidence="5">Protein CXc750</fullName>
    </alternativeName>
</protein>
<dbReference type="EMBL" id="X72022">
    <property type="protein sequence ID" value="CAA50905.1"/>
    <property type="molecule type" value="Genomic_DNA"/>
</dbReference>
<dbReference type="EMBL" id="AC074360">
    <property type="protein sequence ID" value="AAG60156.1"/>
    <property type="molecule type" value="Genomic_DNA"/>
</dbReference>
<dbReference type="EMBL" id="CP002684">
    <property type="protein sequence ID" value="AEE31373.1"/>
    <property type="molecule type" value="Genomic_DNA"/>
</dbReference>
<dbReference type="EMBL" id="AY059950">
    <property type="protein sequence ID" value="AAL24432.1"/>
    <property type="molecule type" value="mRNA"/>
</dbReference>
<dbReference type="EMBL" id="AY128746">
    <property type="protein sequence ID" value="AAM91146.1"/>
    <property type="molecule type" value="mRNA"/>
</dbReference>
<dbReference type="PIR" id="S46537">
    <property type="entry name" value="S46537"/>
</dbReference>
<dbReference type="RefSeq" id="NP_174441.1">
    <property type="nucleotide sequence ID" value="NM_102895.4"/>
</dbReference>
<dbReference type="SMR" id="Q39066"/>
<dbReference type="FunCoup" id="Q39066">
    <property type="interactions" value="47"/>
</dbReference>
<dbReference type="STRING" id="3702.Q39066"/>
<dbReference type="PaxDb" id="3702-AT1G31580.1"/>
<dbReference type="ProteomicsDB" id="247058"/>
<dbReference type="EnsemblPlants" id="AT1G31580.1">
    <property type="protein sequence ID" value="AT1G31580.1"/>
    <property type="gene ID" value="AT1G31580"/>
</dbReference>
<dbReference type="GeneID" id="840047"/>
<dbReference type="Gramene" id="AT1G31580.1">
    <property type="protein sequence ID" value="AT1G31580.1"/>
    <property type="gene ID" value="AT1G31580"/>
</dbReference>
<dbReference type="KEGG" id="ath:AT1G31580"/>
<dbReference type="Araport" id="AT1G31580"/>
<dbReference type="TAIR" id="AT1G31580">
    <property type="gene designation" value="ECS1"/>
</dbReference>
<dbReference type="HOGENOM" id="CLU_2375697_0_0_1"/>
<dbReference type="InParanoid" id="Q39066"/>
<dbReference type="PRO" id="PR:Q39066"/>
<dbReference type="Proteomes" id="UP000006548">
    <property type="component" value="Chromosome 1"/>
</dbReference>
<dbReference type="GO" id="GO:0005576">
    <property type="term" value="C:extracellular region"/>
    <property type="evidence" value="ECO:0007669"/>
    <property type="project" value="UniProtKB-KW"/>
</dbReference>
<dbReference type="GO" id="GO:0009617">
    <property type="term" value="P:response to bacterium"/>
    <property type="evidence" value="ECO:0000270"/>
    <property type="project" value="UniProtKB"/>
</dbReference>
<dbReference type="GO" id="GO:0009416">
    <property type="term" value="P:response to light stimulus"/>
    <property type="evidence" value="ECO:0000270"/>
    <property type="project" value="UniProtKB"/>
</dbReference>
<organism>
    <name type="scientific">Arabidopsis thaliana</name>
    <name type="common">Mouse-ear cress</name>
    <dbReference type="NCBI Taxonomy" id="3702"/>
    <lineage>
        <taxon>Eukaryota</taxon>
        <taxon>Viridiplantae</taxon>
        <taxon>Streptophyta</taxon>
        <taxon>Embryophyta</taxon>
        <taxon>Tracheophyta</taxon>
        <taxon>Spermatophyta</taxon>
        <taxon>Magnoliopsida</taxon>
        <taxon>eudicotyledons</taxon>
        <taxon>Gunneridae</taxon>
        <taxon>Pentapetalae</taxon>
        <taxon>rosids</taxon>
        <taxon>malvids</taxon>
        <taxon>Brassicales</taxon>
        <taxon>Brassicaceae</taxon>
        <taxon>Camelineae</taxon>
        <taxon>Arabidopsis</taxon>
    </lineage>
</organism>
<feature type="signal peptide" evidence="1">
    <location>
        <begin position="1"/>
        <end position="27"/>
    </location>
</feature>
<feature type="chain" id="PRO_5014309064" description="Protein ECS1" evidence="1">
    <location>
        <begin position="28"/>
        <end position="95"/>
    </location>
</feature>
<proteinExistence type="evidence at transcript level"/>
<gene>
    <name evidence="6" type="primary">ECS1</name>
    <name evidence="5" type="synonym">CXc750</name>
    <name evidence="7" type="ordered locus">At1g31580</name>
    <name evidence="8" type="ORF">F27M3.20</name>
</gene>
<accession>Q39066</accession>
<keyword id="KW-0134">Cell wall</keyword>
<keyword id="KW-1185">Reference proteome</keyword>
<keyword id="KW-0964">Secreted</keyword>
<keyword id="KW-0732">Signal</keyword>
<comment type="function">
    <text evidence="4">Maybe involved in defense responses to X.campestris, but probably not a X.campestris pv. campestris race 750 (e.g. Xcc750) resistance gene; according to genetic data, linked to a locus influencing resistance to Xcc750.</text>
</comment>
<comment type="subcellular location">
    <subcellularLocation>
        <location evidence="4">Secreted</location>
        <location evidence="4">Cell wall</location>
    </subcellularLocation>
</comment>
<comment type="tissue specificity">
    <text evidence="4">Expressed in leaves, flowers and stems, but not in roots.</text>
</comment>
<comment type="induction">
    <text evidence="2 3">Accumulates upon infection by the phytopathogenic bacterium X.campestris pv. campestris (both compatible and incompatible strains Xcc168 and Xcc750, respectively), agent of black rot (PubMed:8018872). Accumulates at higher levels in light than in darkness. Repressed by MIF1 (PubMed:16412086).</text>
</comment>
<comment type="miscellaneous">
    <text evidence="3 4">Absent in the susceptible ecotype cv. Oy-0 (PubMed:8018872). Only present in ecotypes resistant against X.campestris pv. campestris race 750 (e.g. Xcc750) (PubMed:9869403).</text>
</comment>
<evidence type="ECO:0000255" key="1"/>
<evidence type="ECO:0000269" key="2">
    <source>
    </source>
</evidence>
<evidence type="ECO:0000269" key="3">
    <source>
    </source>
</evidence>
<evidence type="ECO:0000269" key="4">
    <source>
    </source>
</evidence>
<evidence type="ECO:0000303" key="5">
    <source>
    </source>
</evidence>
<evidence type="ECO:0000303" key="6">
    <source>
    </source>
</evidence>
<evidence type="ECO:0000312" key="7">
    <source>
        <dbReference type="Araport" id="AT1G31580"/>
    </source>
</evidence>
<evidence type="ECO:0000312" key="8">
    <source>
        <dbReference type="EMBL" id="AAG60156.1"/>
    </source>
</evidence>
<reference key="1">
    <citation type="journal article" date="1994" name="Plant Mol. Biol.">
        <title>A new, pathogen-inducible gene of Arabidopsis is expressed in an ecotype-specific manner.</title>
        <authorList>
            <person name="Aufsatz W."/>
            <person name="Grimm C."/>
        </authorList>
    </citation>
    <scope>NUCLEOTIDE SEQUENCE [GENOMIC DNA]</scope>
    <scope>INDUCTION BY XANTHOMONAS CAMPESTRIS</scope>
    <scope>MISCELLANEOUS</scope>
    <source>
        <strain>cv. Columbia</strain>
        <strain>cv. Oy-0</strain>
    </source>
</reference>
<reference key="2">
    <citation type="journal article" date="2000" name="Nature">
        <title>Sequence and analysis of chromosome 1 of the plant Arabidopsis thaliana.</title>
        <authorList>
            <person name="Theologis A."/>
            <person name="Ecker J.R."/>
            <person name="Palm C.J."/>
            <person name="Federspiel N.A."/>
            <person name="Kaul S."/>
            <person name="White O."/>
            <person name="Alonso J."/>
            <person name="Altafi H."/>
            <person name="Araujo R."/>
            <person name="Bowman C.L."/>
            <person name="Brooks S.Y."/>
            <person name="Buehler E."/>
            <person name="Chan A."/>
            <person name="Chao Q."/>
            <person name="Chen H."/>
            <person name="Cheuk R.F."/>
            <person name="Chin C.W."/>
            <person name="Chung M.K."/>
            <person name="Conn L."/>
            <person name="Conway A.B."/>
            <person name="Conway A.R."/>
            <person name="Creasy T.H."/>
            <person name="Dewar K."/>
            <person name="Dunn P."/>
            <person name="Etgu P."/>
            <person name="Feldblyum T.V."/>
            <person name="Feng J.-D."/>
            <person name="Fong B."/>
            <person name="Fujii C.Y."/>
            <person name="Gill J.E."/>
            <person name="Goldsmith A.D."/>
            <person name="Haas B."/>
            <person name="Hansen N.F."/>
            <person name="Hughes B."/>
            <person name="Huizar L."/>
            <person name="Hunter J.L."/>
            <person name="Jenkins J."/>
            <person name="Johnson-Hopson C."/>
            <person name="Khan S."/>
            <person name="Khaykin E."/>
            <person name="Kim C.J."/>
            <person name="Koo H.L."/>
            <person name="Kremenetskaia I."/>
            <person name="Kurtz D.B."/>
            <person name="Kwan A."/>
            <person name="Lam B."/>
            <person name="Langin-Hooper S."/>
            <person name="Lee A."/>
            <person name="Lee J.M."/>
            <person name="Lenz C.A."/>
            <person name="Li J.H."/>
            <person name="Li Y.-P."/>
            <person name="Lin X."/>
            <person name="Liu S.X."/>
            <person name="Liu Z.A."/>
            <person name="Luros J.S."/>
            <person name="Maiti R."/>
            <person name="Marziali A."/>
            <person name="Militscher J."/>
            <person name="Miranda M."/>
            <person name="Nguyen M."/>
            <person name="Nierman W.C."/>
            <person name="Osborne B.I."/>
            <person name="Pai G."/>
            <person name="Peterson J."/>
            <person name="Pham P.K."/>
            <person name="Rizzo M."/>
            <person name="Rooney T."/>
            <person name="Rowley D."/>
            <person name="Sakano H."/>
            <person name="Salzberg S.L."/>
            <person name="Schwartz J.R."/>
            <person name="Shinn P."/>
            <person name="Southwick A.M."/>
            <person name="Sun H."/>
            <person name="Tallon L.J."/>
            <person name="Tambunga G."/>
            <person name="Toriumi M.J."/>
            <person name="Town C.D."/>
            <person name="Utterback T."/>
            <person name="Van Aken S."/>
            <person name="Vaysberg M."/>
            <person name="Vysotskaia V.S."/>
            <person name="Walker M."/>
            <person name="Wu D."/>
            <person name="Yu G."/>
            <person name="Fraser C.M."/>
            <person name="Venter J.C."/>
            <person name="Davis R.W."/>
        </authorList>
    </citation>
    <scope>NUCLEOTIDE SEQUENCE [LARGE SCALE GENOMIC DNA]</scope>
    <source>
        <strain>cv. Columbia</strain>
    </source>
</reference>
<reference key="3">
    <citation type="journal article" date="2017" name="Plant J.">
        <title>Araport11: a complete reannotation of the Arabidopsis thaliana reference genome.</title>
        <authorList>
            <person name="Cheng C.Y."/>
            <person name="Krishnakumar V."/>
            <person name="Chan A.P."/>
            <person name="Thibaud-Nissen F."/>
            <person name="Schobel S."/>
            <person name="Town C.D."/>
        </authorList>
    </citation>
    <scope>GENOME REANNOTATION</scope>
    <source>
        <strain>cv. Columbia</strain>
    </source>
</reference>
<reference key="4">
    <citation type="journal article" date="2003" name="Science">
        <title>Empirical analysis of transcriptional activity in the Arabidopsis genome.</title>
        <authorList>
            <person name="Yamada K."/>
            <person name="Lim J."/>
            <person name="Dale J.M."/>
            <person name="Chen H."/>
            <person name="Shinn P."/>
            <person name="Palm C.J."/>
            <person name="Southwick A.M."/>
            <person name="Wu H.C."/>
            <person name="Kim C.J."/>
            <person name="Nguyen M."/>
            <person name="Pham P.K."/>
            <person name="Cheuk R.F."/>
            <person name="Karlin-Newmann G."/>
            <person name="Liu S.X."/>
            <person name="Lam B."/>
            <person name="Sakano H."/>
            <person name="Wu T."/>
            <person name="Yu G."/>
            <person name="Miranda M."/>
            <person name="Quach H.L."/>
            <person name="Tripp M."/>
            <person name="Chang C.H."/>
            <person name="Lee J.M."/>
            <person name="Toriumi M.J."/>
            <person name="Chan M.M."/>
            <person name="Tang C.C."/>
            <person name="Onodera C.S."/>
            <person name="Deng J.M."/>
            <person name="Akiyama K."/>
            <person name="Ansari Y."/>
            <person name="Arakawa T."/>
            <person name="Banh J."/>
            <person name="Banno F."/>
            <person name="Bowser L."/>
            <person name="Brooks S.Y."/>
            <person name="Carninci P."/>
            <person name="Chao Q."/>
            <person name="Choy N."/>
            <person name="Enju A."/>
            <person name="Goldsmith A.D."/>
            <person name="Gurjal M."/>
            <person name="Hansen N.F."/>
            <person name="Hayashizaki Y."/>
            <person name="Johnson-Hopson C."/>
            <person name="Hsuan V.W."/>
            <person name="Iida K."/>
            <person name="Karnes M."/>
            <person name="Khan S."/>
            <person name="Koesema E."/>
            <person name="Ishida J."/>
            <person name="Jiang P.X."/>
            <person name="Jones T."/>
            <person name="Kawai J."/>
            <person name="Kamiya A."/>
            <person name="Meyers C."/>
            <person name="Nakajima M."/>
            <person name="Narusaka M."/>
            <person name="Seki M."/>
            <person name="Sakurai T."/>
            <person name="Satou M."/>
            <person name="Tamse R."/>
            <person name="Vaysberg M."/>
            <person name="Wallender E.K."/>
            <person name="Wong C."/>
            <person name="Yamamura Y."/>
            <person name="Yuan S."/>
            <person name="Shinozaki K."/>
            <person name="Davis R.W."/>
            <person name="Theologis A."/>
            <person name="Ecker J.R."/>
        </authorList>
    </citation>
    <scope>NUCLEOTIDE SEQUENCE [LARGE SCALE MRNA]</scope>
    <source>
        <strain>cv. Columbia</strain>
    </source>
</reference>
<reference key="5">
    <citation type="journal article" date="1998" name="Plant Mol. Biol.">
        <title>The ECS1 gene of Arabidopsis encodes a plant cell wall-associated protein and is potentially linked to a locus influencing resistance to Xanthomonas campestris.</title>
        <authorList>
            <person name="Aufsatz W."/>
            <person name="Amry D."/>
            <person name="Grimm C."/>
        </authorList>
    </citation>
    <scope>FUNCTION</scope>
    <scope>SUBCELLULAR LOCATION</scope>
    <scope>MISCELLANEOUS</scope>
    <scope>TISSUE SPECIFICITY</scope>
    <source>
        <strain>cv. Columbia</strain>
        <strain>cv. Oy-0</strain>
    </source>
</reference>
<reference key="6">
    <citation type="journal article" date="2006" name="Plant J.">
        <title>Characterization of a novel putative zinc finger gene MIF1: involvement in multiple hormonal regulation of Arabidopsis development.</title>
        <authorList>
            <person name="Hu W."/>
            <person name="Ma H."/>
        </authorList>
    </citation>
    <scope>INDUCTION BY LIGHT</scope>
</reference>
<sequence length="95" mass="10742">MASSIVSSMFLFLLLLLVFPHIDNVLGARMELRELGEINYADPLGFTRPIVPIHVPGFPPRRPTIPQLPPYRPRRCPFCYPPPPPKAFPKNSPSH</sequence>